<keyword id="KW-1185">Reference proteome</keyword>
<protein>
    <recommendedName>
        <fullName evidence="1">Protein Smg homolog</fullName>
    </recommendedName>
</protein>
<feature type="chain" id="PRO_1000025663" description="Protein Smg homolog">
    <location>
        <begin position="1"/>
        <end position="157"/>
    </location>
</feature>
<evidence type="ECO:0000255" key="1">
    <source>
        <dbReference type="HAMAP-Rule" id="MF_00598"/>
    </source>
</evidence>
<gene>
    <name evidence="1" type="primary">smg</name>
    <name type="ordered locus">Sbal_0035</name>
</gene>
<reference key="1">
    <citation type="submission" date="2007-02" db="EMBL/GenBank/DDBJ databases">
        <title>Complete sequence of chromosome of Shewanella baltica OS155.</title>
        <authorList>
            <consortium name="US DOE Joint Genome Institute"/>
            <person name="Copeland A."/>
            <person name="Lucas S."/>
            <person name="Lapidus A."/>
            <person name="Barry K."/>
            <person name="Detter J.C."/>
            <person name="Glavina del Rio T."/>
            <person name="Hammon N."/>
            <person name="Israni S."/>
            <person name="Dalin E."/>
            <person name="Tice H."/>
            <person name="Pitluck S."/>
            <person name="Sims D.R."/>
            <person name="Brettin T."/>
            <person name="Bruce D."/>
            <person name="Han C."/>
            <person name="Tapia R."/>
            <person name="Brainard J."/>
            <person name="Schmutz J."/>
            <person name="Larimer F."/>
            <person name="Land M."/>
            <person name="Hauser L."/>
            <person name="Kyrpides N."/>
            <person name="Mikhailova N."/>
            <person name="Brettar I."/>
            <person name="Klappenbach J."/>
            <person name="Konstantinidis K."/>
            <person name="Rodrigues J."/>
            <person name="Tiedje J."/>
            <person name="Richardson P."/>
        </authorList>
    </citation>
    <scope>NUCLEOTIDE SEQUENCE [LARGE SCALE GENOMIC DNA]</scope>
    <source>
        <strain>OS155 / ATCC BAA-1091</strain>
    </source>
</reference>
<accession>A3CYK8</accession>
<sequence length="157" mass="18664">MFDILMYLFENYVHSEVELLVDEDELTKELTRAGFHQSEILKALTWLERLAELQEGDKPYLCNHDQHSFRIYTKDEMDKLDVESRGFLLFLEQVKVLNVETREMVIDRVMELDEPTLILEDLKWVILMVLFNAPGHESAYEQMEDLIFEQPEGRLHS</sequence>
<organism>
    <name type="scientific">Shewanella baltica (strain OS155 / ATCC BAA-1091)</name>
    <dbReference type="NCBI Taxonomy" id="325240"/>
    <lineage>
        <taxon>Bacteria</taxon>
        <taxon>Pseudomonadati</taxon>
        <taxon>Pseudomonadota</taxon>
        <taxon>Gammaproteobacteria</taxon>
        <taxon>Alteromonadales</taxon>
        <taxon>Shewanellaceae</taxon>
        <taxon>Shewanella</taxon>
    </lineage>
</organism>
<comment type="similarity">
    <text evidence="1">Belongs to the Smg family.</text>
</comment>
<proteinExistence type="inferred from homology"/>
<dbReference type="EMBL" id="CP000563">
    <property type="protein sequence ID" value="ABN59571.1"/>
    <property type="molecule type" value="Genomic_DNA"/>
</dbReference>
<dbReference type="RefSeq" id="WP_006083793.1">
    <property type="nucleotide sequence ID" value="NC_009052.1"/>
</dbReference>
<dbReference type="SMR" id="A3CYK8"/>
<dbReference type="STRING" id="325240.Sbal_0035"/>
<dbReference type="KEGG" id="sbl:Sbal_0035"/>
<dbReference type="HOGENOM" id="CLU_133242_0_0_6"/>
<dbReference type="OrthoDB" id="9788984at2"/>
<dbReference type="Proteomes" id="UP000001557">
    <property type="component" value="Chromosome"/>
</dbReference>
<dbReference type="HAMAP" id="MF_00598">
    <property type="entry name" value="Smg"/>
    <property type="match status" value="1"/>
</dbReference>
<dbReference type="InterPro" id="IPR007456">
    <property type="entry name" value="Smg"/>
</dbReference>
<dbReference type="NCBIfam" id="NF002897">
    <property type="entry name" value="PRK03430.1"/>
    <property type="match status" value="1"/>
</dbReference>
<dbReference type="PANTHER" id="PTHR38692">
    <property type="entry name" value="PROTEIN SMG"/>
    <property type="match status" value="1"/>
</dbReference>
<dbReference type="PANTHER" id="PTHR38692:SF1">
    <property type="entry name" value="PROTEIN SMG"/>
    <property type="match status" value="1"/>
</dbReference>
<dbReference type="Pfam" id="PF04361">
    <property type="entry name" value="DUF494"/>
    <property type="match status" value="1"/>
</dbReference>
<name>SMG_SHEB5</name>